<protein>
    <recommendedName>
        <fullName evidence="1">Glutamate--tRNA ligase</fullName>
        <ecNumber evidence="1">6.1.1.17</ecNumber>
    </recommendedName>
    <alternativeName>
        <fullName evidence="1">Glutamyl-tRNA synthetase</fullName>
        <shortName evidence="1">GluRS</shortName>
    </alternativeName>
</protein>
<name>SYE_STRT1</name>
<sequence>MAKDIRVRYAPSPTGLLHIGNARTALFNYLYARHHGGTFIIRIEDTDRKRHVEDGERSQLDNLRWLGIDWDESPETHENYRQSERLPLYQKYIDQLLAEGKAYKSYVTEEELAAERERQEAAGETPRYINEFLGMTEEEKAAYIAEREAAGIIPTVRLAVNESGIYKWHDIVKGDIEFEGGNIGGDWVIQKRDGYPTYNFAVVVDDHDMQISHVIRGDDHIANTPKQLMVYEALGWEAPEFGHMTLITNSETGKKLSKRDTNTLQFIEDYRKKGYLPEAVFNFIALLGWNPGGEDEIFSREELIKLFDENRLSKSPAAFDQKKLDWMSNDYIKHADFDKVFALCKPFLEEAGRLTDKAEKLVELYKPQMTAAEEIVPLTDLFFEDFPELTAAEKEVMAGETVPTVLEAFKAKLEAMSDDEFVTENIFSQIKAVQKETGIKGKNLFMPIRIAVSGEMHGPELPETIFLLGREKSIKHIDQVLATL</sequence>
<dbReference type="EC" id="6.1.1.17" evidence="1"/>
<dbReference type="EMBL" id="CP000024">
    <property type="protein sequence ID" value="AAV63330.1"/>
    <property type="molecule type" value="Genomic_DNA"/>
</dbReference>
<dbReference type="RefSeq" id="WP_002953532.1">
    <property type="nucleotide sequence ID" value="NC_006449.1"/>
</dbReference>
<dbReference type="SMR" id="Q5LXZ7"/>
<dbReference type="GeneID" id="66899551"/>
<dbReference type="KEGG" id="stc:str1814"/>
<dbReference type="HOGENOM" id="CLU_015768_6_1_9"/>
<dbReference type="GO" id="GO:0005829">
    <property type="term" value="C:cytosol"/>
    <property type="evidence" value="ECO:0007669"/>
    <property type="project" value="TreeGrafter"/>
</dbReference>
<dbReference type="GO" id="GO:0005524">
    <property type="term" value="F:ATP binding"/>
    <property type="evidence" value="ECO:0007669"/>
    <property type="project" value="UniProtKB-UniRule"/>
</dbReference>
<dbReference type="GO" id="GO:0004818">
    <property type="term" value="F:glutamate-tRNA ligase activity"/>
    <property type="evidence" value="ECO:0007669"/>
    <property type="project" value="UniProtKB-UniRule"/>
</dbReference>
<dbReference type="GO" id="GO:0000049">
    <property type="term" value="F:tRNA binding"/>
    <property type="evidence" value="ECO:0007669"/>
    <property type="project" value="InterPro"/>
</dbReference>
<dbReference type="GO" id="GO:0008270">
    <property type="term" value="F:zinc ion binding"/>
    <property type="evidence" value="ECO:0007669"/>
    <property type="project" value="InterPro"/>
</dbReference>
<dbReference type="GO" id="GO:0006424">
    <property type="term" value="P:glutamyl-tRNA aminoacylation"/>
    <property type="evidence" value="ECO:0007669"/>
    <property type="project" value="UniProtKB-UniRule"/>
</dbReference>
<dbReference type="CDD" id="cd00808">
    <property type="entry name" value="GluRS_core"/>
    <property type="match status" value="1"/>
</dbReference>
<dbReference type="FunFam" id="1.10.10.350:FF:000002">
    <property type="entry name" value="Glutamate--tRNA ligase"/>
    <property type="match status" value="1"/>
</dbReference>
<dbReference type="FunFam" id="3.40.50.620:FF:000007">
    <property type="entry name" value="Glutamate--tRNA ligase"/>
    <property type="match status" value="1"/>
</dbReference>
<dbReference type="Gene3D" id="1.10.10.350">
    <property type="match status" value="1"/>
</dbReference>
<dbReference type="Gene3D" id="3.40.50.620">
    <property type="entry name" value="HUPs"/>
    <property type="match status" value="1"/>
</dbReference>
<dbReference type="HAMAP" id="MF_00022">
    <property type="entry name" value="Glu_tRNA_synth_type1"/>
    <property type="match status" value="1"/>
</dbReference>
<dbReference type="InterPro" id="IPR045462">
    <property type="entry name" value="aa-tRNA-synth_I_cd-bd"/>
</dbReference>
<dbReference type="InterPro" id="IPR020751">
    <property type="entry name" value="aa-tRNA-synth_I_codon-bd_sub2"/>
</dbReference>
<dbReference type="InterPro" id="IPR001412">
    <property type="entry name" value="aa-tRNA-synth_I_CS"/>
</dbReference>
<dbReference type="InterPro" id="IPR008925">
    <property type="entry name" value="aa_tRNA-synth_I_cd-bd_sf"/>
</dbReference>
<dbReference type="InterPro" id="IPR004527">
    <property type="entry name" value="Glu-tRNA-ligase_bac/mito"/>
</dbReference>
<dbReference type="InterPro" id="IPR000924">
    <property type="entry name" value="Glu/Gln-tRNA-synth"/>
</dbReference>
<dbReference type="InterPro" id="IPR020058">
    <property type="entry name" value="Glu/Gln-tRNA-synth_Ib_cat-dom"/>
</dbReference>
<dbReference type="InterPro" id="IPR049940">
    <property type="entry name" value="GluQ/Sye"/>
</dbReference>
<dbReference type="InterPro" id="IPR033910">
    <property type="entry name" value="GluRS_core"/>
</dbReference>
<dbReference type="InterPro" id="IPR014729">
    <property type="entry name" value="Rossmann-like_a/b/a_fold"/>
</dbReference>
<dbReference type="NCBIfam" id="TIGR00464">
    <property type="entry name" value="gltX_bact"/>
    <property type="match status" value="1"/>
</dbReference>
<dbReference type="PANTHER" id="PTHR43311">
    <property type="entry name" value="GLUTAMATE--TRNA LIGASE"/>
    <property type="match status" value="1"/>
</dbReference>
<dbReference type="PANTHER" id="PTHR43311:SF2">
    <property type="entry name" value="GLUTAMATE--TRNA LIGASE, MITOCHONDRIAL-RELATED"/>
    <property type="match status" value="1"/>
</dbReference>
<dbReference type="Pfam" id="PF19269">
    <property type="entry name" value="Anticodon_2"/>
    <property type="match status" value="1"/>
</dbReference>
<dbReference type="Pfam" id="PF00749">
    <property type="entry name" value="tRNA-synt_1c"/>
    <property type="match status" value="1"/>
</dbReference>
<dbReference type="PRINTS" id="PR00987">
    <property type="entry name" value="TRNASYNTHGLU"/>
</dbReference>
<dbReference type="SUPFAM" id="SSF48163">
    <property type="entry name" value="An anticodon-binding domain of class I aminoacyl-tRNA synthetases"/>
    <property type="match status" value="1"/>
</dbReference>
<dbReference type="SUPFAM" id="SSF52374">
    <property type="entry name" value="Nucleotidylyl transferase"/>
    <property type="match status" value="1"/>
</dbReference>
<dbReference type="PROSITE" id="PS00178">
    <property type="entry name" value="AA_TRNA_LIGASE_I"/>
    <property type="match status" value="1"/>
</dbReference>
<gene>
    <name evidence="1" type="primary">gltX</name>
    <name type="ordered locus">str1814</name>
</gene>
<accession>Q5LXZ7</accession>
<comment type="function">
    <text evidence="1">Catalyzes the attachment of glutamate to tRNA(Glu) in a two-step reaction: glutamate is first activated by ATP to form Glu-AMP and then transferred to the acceptor end of tRNA(Glu).</text>
</comment>
<comment type="catalytic activity">
    <reaction evidence="1">
        <text>tRNA(Glu) + L-glutamate + ATP = L-glutamyl-tRNA(Glu) + AMP + diphosphate</text>
        <dbReference type="Rhea" id="RHEA:23540"/>
        <dbReference type="Rhea" id="RHEA-COMP:9663"/>
        <dbReference type="Rhea" id="RHEA-COMP:9680"/>
        <dbReference type="ChEBI" id="CHEBI:29985"/>
        <dbReference type="ChEBI" id="CHEBI:30616"/>
        <dbReference type="ChEBI" id="CHEBI:33019"/>
        <dbReference type="ChEBI" id="CHEBI:78442"/>
        <dbReference type="ChEBI" id="CHEBI:78520"/>
        <dbReference type="ChEBI" id="CHEBI:456215"/>
        <dbReference type="EC" id="6.1.1.17"/>
    </reaction>
</comment>
<comment type="subunit">
    <text evidence="1">Monomer.</text>
</comment>
<comment type="subcellular location">
    <subcellularLocation>
        <location evidence="1">Cytoplasm</location>
    </subcellularLocation>
</comment>
<comment type="similarity">
    <text evidence="1">Belongs to the class-I aminoacyl-tRNA synthetase family. Glutamate--tRNA ligase type 1 subfamily.</text>
</comment>
<feature type="chain" id="PRO_0000119671" description="Glutamate--tRNA ligase">
    <location>
        <begin position="1"/>
        <end position="484"/>
    </location>
</feature>
<feature type="short sequence motif" description="'HIGH' region" evidence="1">
    <location>
        <begin position="11"/>
        <end position="21"/>
    </location>
</feature>
<feature type="short sequence motif" description="'KMSKS' region" evidence="1">
    <location>
        <begin position="255"/>
        <end position="259"/>
    </location>
</feature>
<feature type="binding site" evidence="1">
    <location>
        <position position="258"/>
    </location>
    <ligand>
        <name>ATP</name>
        <dbReference type="ChEBI" id="CHEBI:30616"/>
    </ligand>
</feature>
<reference key="1">
    <citation type="journal article" date="2004" name="Nat. Biotechnol.">
        <title>Complete sequence and comparative genome analysis of the dairy bacterium Streptococcus thermophilus.</title>
        <authorList>
            <person name="Bolotin A."/>
            <person name="Quinquis B."/>
            <person name="Renault P."/>
            <person name="Sorokin A."/>
            <person name="Ehrlich S.D."/>
            <person name="Kulakauskas S."/>
            <person name="Lapidus A."/>
            <person name="Goltsman E."/>
            <person name="Mazur M."/>
            <person name="Pusch G.D."/>
            <person name="Fonstein M."/>
            <person name="Overbeek R."/>
            <person name="Kyprides N."/>
            <person name="Purnelle B."/>
            <person name="Prozzi D."/>
            <person name="Ngui K."/>
            <person name="Masuy D."/>
            <person name="Hancy F."/>
            <person name="Burteau S."/>
            <person name="Boutry M."/>
            <person name="Delcour J."/>
            <person name="Goffeau A."/>
            <person name="Hols P."/>
        </authorList>
    </citation>
    <scope>NUCLEOTIDE SEQUENCE [LARGE SCALE GENOMIC DNA]</scope>
    <source>
        <strain>CNRZ 1066</strain>
    </source>
</reference>
<proteinExistence type="inferred from homology"/>
<organism>
    <name type="scientific">Streptococcus thermophilus (strain CNRZ 1066)</name>
    <dbReference type="NCBI Taxonomy" id="299768"/>
    <lineage>
        <taxon>Bacteria</taxon>
        <taxon>Bacillati</taxon>
        <taxon>Bacillota</taxon>
        <taxon>Bacilli</taxon>
        <taxon>Lactobacillales</taxon>
        <taxon>Streptococcaceae</taxon>
        <taxon>Streptococcus</taxon>
    </lineage>
</organism>
<keyword id="KW-0030">Aminoacyl-tRNA synthetase</keyword>
<keyword id="KW-0067">ATP-binding</keyword>
<keyword id="KW-0963">Cytoplasm</keyword>
<keyword id="KW-0436">Ligase</keyword>
<keyword id="KW-0547">Nucleotide-binding</keyword>
<keyword id="KW-0648">Protein biosynthesis</keyword>
<evidence type="ECO:0000255" key="1">
    <source>
        <dbReference type="HAMAP-Rule" id="MF_00022"/>
    </source>
</evidence>